<evidence type="ECO:0000250" key="1">
    <source>
        <dbReference type="UniProtKB" id="Q3ZD74"/>
    </source>
</evidence>
<evidence type="ECO:0000255" key="2"/>
<evidence type="ECO:0000255" key="3">
    <source>
        <dbReference type="PROSITE-ProRule" id="PRU00276"/>
    </source>
</evidence>
<evidence type="ECO:0000269" key="4">
    <source>
    </source>
</evidence>
<evidence type="ECO:0000303" key="5">
    <source>
    </source>
</evidence>
<evidence type="ECO:0000305" key="6"/>
<evidence type="ECO:0000305" key="7">
    <source>
    </source>
</evidence>
<evidence type="ECO:0000305" key="8">
    <source>
    </source>
</evidence>
<evidence type="ECO:0000312" key="9">
    <source>
        <dbReference type="EMBL" id="AHE40588.1"/>
    </source>
</evidence>
<evidence type="ECO:0000312" key="10">
    <source>
        <dbReference type="EMBL" id="AIJ02109.2"/>
    </source>
</evidence>
<dbReference type="EC" id="3.4.24.-"/>
<dbReference type="EMBL" id="KM115016">
    <property type="protein sequence ID" value="AIJ02109.2"/>
    <property type="molecule type" value="mRNA"/>
</dbReference>
<dbReference type="EMBL" id="KC693035">
    <property type="protein sequence ID" value="AHE40588.1"/>
    <property type="molecule type" value="mRNA"/>
</dbReference>
<dbReference type="SMR" id="P86392"/>
<dbReference type="MEROPS" id="M12.191"/>
<dbReference type="GO" id="GO:0005576">
    <property type="term" value="C:extracellular region"/>
    <property type="evidence" value="ECO:0007669"/>
    <property type="project" value="UniProtKB-SubCell"/>
</dbReference>
<dbReference type="GO" id="GO:0046872">
    <property type="term" value="F:metal ion binding"/>
    <property type="evidence" value="ECO:0007669"/>
    <property type="project" value="UniProtKB-KW"/>
</dbReference>
<dbReference type="GO" id="GO:0004222">
    <property type="term" value="F:metalloendopeptidase activity"/>
    <property type="evidence" value="ECO:0007669"/>
    <property type="project" value="InterPro"/>
</dbReference>
<dbReference type="GO" id="GO:0090729">
    <property type="term" value="F:toxin activity"/>
    <property type="evidence" value="ECO:0007669"/>
    <property type="project" value="UniProtKB-KW"/>
</dbReference>
<dbReference type="GO" id="GO:0006509">
    <property type="term" value="P:membrane protein ectodomain proteolysis"/>
    <property type="evidence" value="ECO:0007669"/>
    <property type="project" value="TreeGrafter"/>
</dbReference>
<dbReference type="Gene3D" id="3.40.390.10">
    <property type="entry name" value="Collagenase (Catalytic Domain)"/>
    <property type="match status" value="1"/>
</dbReference>
<dbReference type="InterPro" id="IPR024079">
    <property type="entry name" value="MetalloPept_cat_dom_sf"/>
</dbReference>
<dbReference type="InterPro" id="IPR001590">
    <property type="entry name" value="Peptidase_M12B"/>
</dbReference>
<dbReference type="PANTHER" id="PTHR11905">
    <property type="entry name" value="ADAM A DISINTEGRIN AND METALLOPROTEASE DOMAIN"/>
    <property type="match status" value="1"/>
</dbReference>
<dbReference type="PANTHER" id="PTHR11905:SF159">
    <property type="entry name" value="ADAM METALLOPROTEASE"/>
    <property type="match status" value="1"/>
</dbReference>
<dbReference type="Pfam" id="PF13688">
    <property type="entry name" value="Reprolysin_5"/>
    <property type="match status" value="1"/>
</dbReference>
<dbReference type="SUPFAM" id="SSF55486">
    <property type="entry name" value="Metalloproteases ('zincins'), catalytic domain"/>
    <property type="match status" value="1"/>
</dbReference>
<dbReference type="PROSITE" id="PS50215">
    <property type="entry name" value="ADAM_MEPRO"/>
    <property type="match status" value="1"/>
</dbReference>
<accession>P86392</accession>
<accession>A0A076L876</accession>
<accession>V9Z8X8</accession>
<reference evidence="10" key="1">
    <citation type="journal article" date="2014" name="Toxicon">
        <title>Molecular and functional characterization of metalloserrulases, new metalloproteases from the Tityus serrulatus venom gland.</title>
        <authorList>
            <person name="Carmo A.O."/>
            <person name="Oliveira-Mendes B.B."/>
            <person name="Horta C.C."/>
            <person name="Magalhaes B.F."/>
            <person name="Dantas A.E."/>
            <person name="Chaves L.M."/>
            <person name="Chavez-Olortegui C."/>
            <person name="Kalapothakis E."/>
        </authorList>
    </citation>
    <scope>NUCLEOTIDE SEQUENCE [MRNA]</scope>
    <source>
        <tissue>Venom gland</tissue>
    </source>
</reference>
<reference evidence="9" key="2">
    <citation type="journal article" date="2014" name="Biochim. Biophys. Acta">
        <title>Antarease-like Zn-metalloproteases are ubiquitous in the venom of different scorpion genera.</title>
        <authorList>
            <person name="Ortiz E."/>
            <person name="Rendon-Anaya M."/>
            <person name="Rego S.C."/>
            <person name="Schwartz E.F."/>
            <person name="Possani L.D."/>
        </authorList>
    </citation>
    <scope>NUCLEOTIDE SEQUENCE [MRNA] OF 159-393</scope>
    <source>
        <tissue>Venom gland</tissue>
    </source>
</reference>
<reference key="3">
    <citation type="journal article" date="2010" name="J. Biol. Chem.">
        <title>Vesicle-associated membrane protein (VAMP) cleavage by a new metalloprotease from the Brazilian scorpion Tityus serrulatus.</title>
        <authorList>
            <person name="Fletcher P.L. Jr."/>
            <person name="Fletcher M.D."/>
            <person name="Weninger K."/>
            <person name="Anderson T.E."/>
            <person name="Martin B.M."/>
        </authorList>
    </citation>
    <scope>PROTEIN SEQUENCE OF 158-194 AND 203-393</scope>
    <scope>FUNCTION</scope>
    <scope>ACTIVITY REGULATION</scope>
    <scope>SUBCELLULAR LOCATION</scope>
    <scope>TISSUE SPECIFICITY</scope>
    <scope>MASS SPECTROMETRY</scope>
    <source>
        <tissue>Venom</tissue>
    </source>
</reference>
<proteinExistence type="evidence at protein level"/>
<name>VMPA1_TITSE</name>
<keyword id="KW-0903">Direct protein sequencing</keyword>
<keyword id="KW-1015">Disulfide bond</keyword>
<keyword id="KW-0378">Hydrolase</keyword>
<keyword id="KW-0479">Metal-binding</keyword>
<keyword id="KW-0482">Metalloprotease</keyword>
<keyword id="KW-0645">Protease</keyword>
<keyword id="KW-0964">Secreted</keyword>
<keyword id="KW-0732">Signal</keyword>
<keyword id="KW-0800">Toxin</keyword>
<keyword id="KW-0862">Zinc</keyword>
<sequence>MISYLASIFLLATVSAVPSGRVEVVFPSVETSRSGVKTVKFTALDQDVELKLRSAGEILGKRFAIQDVDVESLRRKIYRDSVNGAALLIDEDGPLTIEGIVNSKLRIQPFESGRITKDGIIAHQIVEVIDDKKSYDRVAVIPENVKRNAENVSRMARDDDCIVVEYYIVTDSAFTKRFKSNSALTNYVTVMFTGVQNLMDTLELGIGVRLLGVTTFTEKTEPSFIKDNLIPGPPAAFDPDVLISAMSKYYCNHQTGLAKDTDLIFLITARGMGDPREDGTVDINTAGIANSAGVCKPCFKSGIATDDSDYNERVDTLAHESVHLLGSPHDGEGPNLVSLEGSPGAANCPAKAGYIMGNRNDKNKYKFSPCTKKCVEYLLSKPTASCIFQQCTDF</sequence>
<comment type="function">
    <text evidence="4">Acts as a metalloprotease. Penetrates intact tissue and specifically cleaves the vesicle-associated membrane protein 2 (VAMP2) (part of the SNARE complex) involved in pancreatic secretion, thus disrupting the normal vesicular traffic.</text>
</comment>
<comment type="cofactor">
    <cofactor evidence="1">
        <name>Zn(2+)</name>
        <dbReference type="ChEBI" id="CHEBI:29105"/>
    </cofactor>
    <text evidence="1">Binds 1 zinc ion per subunit.</text>
</comment>
<comment type="activity regulation">
    <text evidence="4">Inhibited by EDTA.</text>
</comment>
<comment type="subcellular location">
    <subcellularLocation>
        <location evidence="4">Secreted</location>
    </subcellularLocation>
</comment>
<comment type="tissue specificity">
    <text evidence="4">Expressed by the venom gland.</text>
</comment>
<comment type="PTM">
    <text evidence="8">Contains 4 disulfide bonds.</text>
</comment>
<comment type="mass spectrometry"/>
<comment type="similarity">
    <text evidence="6">Belongs to the venom metalloproteinase (M12B) family.</text>
</comment>
<organism>
    <name type="scientific">Tityus serrulatus</name>
    <name type="common">Brazilian scorpion</name>
    <dbReference type="NCBI Taxonomy" id="6887"/>
    <lineage>
        <taxon>Eukaryota</taxon>
        <taxon>Metazoa</taxon>
        <taxon>Ecdysozoa</taxon>
        <taxon>Arthropoda</taxon>
        <taxon>Chelicerata</taxon>
        <taxon>Arachnida</taxon>
        <taxon>Scorpiones</taxon>
        <taxon>Buthida</taxon>
        <taxon>Buthoidea</taxon>
        <taxon>Buthidae</taxon>
        <taxon>Tityus</taxon>
    </lineage>
</organism>
<feature type="signal peptide" evidence="2">
    <location>
        <begin position="1"/>
        <end position="16"/>
    </location>
</feature>
<feature type="propeptide" id="PRO_0000455749" evidence="7 8">
    <location>
        <begin position="17"/>
        <end position="157"/>
    </location>
</feature>
<feature type="chain" id="PRO_0000391698" description="Venom metalloproteinase antarease TserMP_A">
    <location>
        <begin position="158"/>
        <end position="394"/>
    </location>
</feature>
<feature type="domain" description="Peptidase M12B" evidence="3">
    <location>
        <begin position="162"/>
        <end position="391"/>
    </location>
</feature>
<feature type="active site" evidence="3">
    <location>
        <position position="320"/>
    </location>
</feature>
<feature type="binding site" evidence="3">
    <location>
        <position position="319"/>
    </location>
    <ligand>
        <name>Zn(2+)</name>
        <dbReference type="ChEBI" id="CHEBI:29105"/>
        <note>catalytic</note>
    </ligand>
</feature>
<feature type="binding site" evidence="3">
    <location>
        <position position="323"/>
    </location>
    <ligand>
        <name>Zn(2+)</name>
        <dbReference type="ChEBI" id="CHEBI:29105"/>
        <note>catalytic</note>
    </ligand>
</feature>
<feature type="binding site" evidence="3">
    <location>
        <position position="329"/>
    </location>
    <ligand>
        <name>Zn(2+)</name>
        <dbReference type="ChEBI" id="CHEBI:29105"/>
        <note>catalytic</note>
    </ligand>
</feature>
<feature type="disulfide bond" evidence="3">
    <location>
        <begin position="295"/>
        <end position="386"/>
    </location>
</feature>
<feature type="sequence conflict" description="In Ref. 3; AA sequence." evidence="6" ref="3">
    <location>
        <position position="340"/>
    </location>
</feature>
<feature type="sequence conflict" description="In Ref. 3; AA sequence." evidence="6" ref="3">
    <original>K</original>
    <variation>KV</variation>
    <location>
        <position position="362"/>
    </location>
</feature>
<feature type="sequence conflict" description="In Ref. 3; AA sequence." evidence="6" ref="3">
    <original>T</original>
    <variation>S</variation>
    <location>
        <position position="392"/>
    </location>
</feature>
<protein>
    <recommendedName>
        <fullName>Venom metalloproteinase antarease TserMP_A</fullName>
        <shortName>VMPA</shortName>
        <ecNumber>3.4.24.-</ecNumber>
    </recommendedName>
    <alternativeName>
        <fullName evidence="5">Metalloserrulase 1</fullName>
        <shortName evidence="5">TsMS 1</shortName>
    </alternativeName>
</protein>